<keyword id="KW-0342">GTP-binding</keyword>
<keyword id="KW-0496">Mitochondrion</keyword>
<keyword id="KW-0547">Nucleotide-binding</keyword>
<keyword id="KW-0648">Protein biosynthesis</keyword>
<keyword id="KW-1185">Reference proteome</keyword>
<keyword id="KW-0809">Transit peptide</keyword>
<proteinExistence type="inferred from homology"/>
<sequence length="835" mass="92559">MPWCNTRLRTCGASPKIFLRRVRCPVLLHNWTIGRVSSVSKMILRFLRSYSKRVDITRVRNIGIIAHIDAGKTTTTERMLYYSGKIKRIGDVDHGDTITDFLPQERSRGITIQSAAISFNWRDNYTVNLIDTPGHADFTFEVIRSLRVLDGCVTILDAVAGVEAQTEKVWKQAAEIPKVCFINKMDRVGAGYSRAVKELIVKLKTRVLLLNTPLFAARDSSADPVFVGVLDAVNGQLLEWDPEDPDKISAKAVDKECAHYEELVSAREALVETLSEVDEKLVEYFLGEADGDYMKVPVEVLNESIRRATLSQYAVPVLCGASFKNIGVQPLLDAVVDYLPSPAEARLPELSNKDLPVQHHLKNGLLVNKNANLCLALAFKVTTDPIRGAMVFIRVYSGVLNSGHTVYNSSTGVKFKLGKLIKMHANVAEDIKSLHPGDIGVLAGANVADHVRTGDTIVAHCTSKDGIRSFKKAELALRIHPIDIPPPVFSAAVEPRTLGNKKAMDESLTQLTREDPSLVIVRDEETGQTVMNGMGELHLEIAADRLLNEFKAPVRVGKVAVSYKETINTATETKHSETDDGYSFELEVRQYNEEDKVLFSNGWYPLGSDNNYLVIDPNPRFNEDNWPFPLKYEAFVNSIISCCIVALQRGGKTAGFPLHSCVIHVKRWRLPLDCAAAASILLTVRPLIISALTSLPTSAFSILEPIMNVEVTVQQQDLGSVVQDLTGARKANILSIDDEHHWADAAVTDKDVHLFHDIAEKQYLPPDSTVFQAKLNKEGQTGKIVKAHVPLKEMVSYMNKLRMLTKGRGSFHMSYLGMERASSDRVDGILEDADL</sequence>
<feature type="transit peptide" description="Mitochondrion" evidence="1">
    <location>
        <begin position="1"/>
        <end position="50"/>
    </location>
</feature>
<feature type="chain" id="PRO_0000385608" description="Ribosome-releasing factor 2, mitochondrial">
    <location>
        <begin position="51"/>
        <end position="835"/>
    </location>
</feature>
<feature type="domain" description="tr-type G">
    <location>
        <begin position="57"/>
        <end position="343"/>
    </location>
</feature>
<feature type="binding site" evidence="1">
    <location>
        <begin position="66"/>
        <end position="73"/>
    </location>
    <ligand>
        <name>GTP</name>
        <dbReference type="ChEBI" id="CHEBI:37565"/>
    </ligand>
</feature>
<feature type="binding site" evidence="1">
    <location>
        <begin position="131"/>
        <end position="135"/>
    </location>
    <ligand>
        <name>GTP</name>
        <dbReference type="ChEBI" id="CHEBI:37565"/>
    </ligand>
</feature>
<feature type="binding site" evidence="1">
    <location>
        <begin position="183"/>
        <end position="186"/>
    </location>
    <ligand>
        <name>GTP</name>
        <dbReference type="ChEBI" id="CHEBI:37565"/>
    </ligand>
</feature>
<dbReference type="EMBL" id="AE016819">
    <property type="protein sequence ID" value="AAS53456.1"/>
    <property type="molecule type" value="Genomic_DNA"/>
</dbReference>
<dbReference type="RefSeq" id="NP_985632.1">
    <property type="nucleotide sequence ID" value="NM_210986.1"/>
</dbReference>
<dbReference type="SMR" id="Q754I9"/>
<dbReference type="FunCoup" id="Q754I9">
    <property type="interactions" value="618"/>
</dbReference>
<dbReference type="STRING" id="284811.Q754I9"/>
<dbReference type="EnsemblFungi" id="AAS53456">
    <property type="protein sequence ID" value="AAS53456"/>
    <property type="gene ID" value="AGOS_AFR085W"/>
</dbReference>
<dbReference type="GeneID" id="4621875"/>
<dbReference type="KEGG" id="ago:AGOS_AFR085W"/>
<dbReference type="eggNOG" id="KOG0465">
    <property type="taxonomic scope" value="Eukaryota"/>
</dbReference>
<dbReference type="HOGENOM" id="CLU_002794_4_1_1"/>
<dbReference type="InParanoid" id="Q754I9"/>
<dbReference type="OMA" id="GPQFTFP"/>
<dbReference type="OrthoDB" id="198619at2759"/>
<dbReference type="Proteomes" id="UP000000591">
    <property type="component" value="Chromosome VI"/>
</dbReference>
<dbReference type="GO" id="GO:0005739">
    <property type="term" value="C:mitochondrion"/>
    <property type="evidence" value="ECO:0007669"/>
    <property type="project" value="UniProtKB-SubCell"/>
</dbReference>
<dbReference type="GO" id="GO:0005525">
    <property type="term" value="F:GTP binding"/>
    <property type="evidence" value="ECO:0007669"/>
    <property type="project" value="UniProtKB-UniRule"/>
</dbReference>
<dbReference type="GO" id="GO:0003924">
    <property type="term" value="F:GTPase activity"/>
    <property type="evidence" value="ECO:0000318"/>
    <property type="project" value="GO_Central"/>
</dbReference>
<dbReference type="GO" id="GO:0000002">
    <property type="term" value="P:mitochondrial genome maintenance"/>
    <property type="evidence" value="ECO:0007669"/>
    <property type="project" value="EnsemblFungi"/>
</dbReference>
<dbReference type="GO" id="GO:0032543">
    <property type="term" value="P:mitochondrial translation"/>
    <property type="evidence" value="ECO:0000318"/>
    <property type="project" value="GO_Central"/>
</dbReference>
<dbReference type="GO" id="GO:0051881">
    <property type="term" value="P:regulation of mitochondrial membrane potential"/>
    <property type="evidence" value="ECO:0007669"/>
    <property type="project" value="EnsemblFungi"/>
</dbReference>
<dbReference type="GO" id="GO:0032790">
    <property type="term" value="P:ribosome disassembly"/>
    <property type="evidence" value="ECO:0000318"/>
    <property type="project" value="GO_Central"/>
</dbReference>
<dbReference type="CDD" id="cd01886">
    <property type="entry name" value="EF-G"/>
    <property type="match status" value="1"/>
</dbReference>
<dbReference type="CDD" id="cd16262">
    <property type="entry name" value="EFG_III"/>
    <property type="match status" value="1"/>
</dbReference>
<dbReference type="CDD" id="cd03713">
    <property type="entry name" value="EFG_mtEFG_C"/>
    <property type="match status" value="1"/>
</dbReference>
<dbReference type="FunFam" id="3.40.50.300:FF:001636">
    <property type="entry name" value="Ribosome-releasing factor 2, mitochondrial"/>
    <property type="match status" value="1"/>
</dbReference>
<dbReference type="FunFam" id="3.30.70.870:FF:000002">
    <property type="entry name" value="Translation elongation factor 2"/>
    <property type="match status" value="1"/>
</dbReference>
<dbReference type="Gene3D" id="3.30.70.240">
    <property type="match status" value="1"/>
</dbReference>
<dbReference type="Gene3D" id="3.30.70.870">
    <property type="entry name" value="Elongation Factor G (Translational Gtpase), domain 3"/>
    <property type="match status" value="1"/>
</dbReference>
<dbReference type="Gene3D" id="3.40.50.300">
    <property type="entry name" value="P-loop containing nucleotide triphosphate hydrolases"/>
    <property type="match status" value="1"/>
</dbReference>
<dbReference type="Gene3D" id="2.40.30.10">
    <property type="entry name" value="Translation factors"/>
    <property type="match status" value="1"/>
</dbReference>
<dbReference type="HAMAP" id="MF_03059">
    <property type="entry name" value="mEF_G_2"/>
    <property type="match status" value="1"/>
</dbReference>
<dbReference type="InterPro" id="IPR053905">
    <property type="entry name" value="EF-G-like_DII"/>
</dbReference>
<dbReference type="InterPro" id="IPR030851">
    <property type="entry name" value="EFG2"/>
</dbReference>
<dbReference type="InterPro" id="IPR041095">
    <property type="entry name" value="EFG_II"/>
</dbReference>
<dbReference type="InterPro" id="IPR009022">
    <property type="entry name" value="EFG_III"/>
</dbReference>
<dbReference type="InterPro" id="IPR035647">
    <property type="entry name" value="EFG_III/V"/>
</dbReference>
<dbReference type="InterPro" id="IPR035649">
    <property type="entry name" value="EFG_V"/>
</dbReference>
<dbReference type="InterPro" id="IPR000640">
    <property type="entry name" value="EFG_V-like"/>
</dbReference>
<dbReference type="InterPro" id="IPR031157">
    <property type="entry name" value="G_TR_CS"/>
</dbReference>
<dbReference type="InterPro" id="IPR027417">
    <property type="entry name" value="P-loop_NTPase"/>
</dbReference>
<dbReference type="InterPro" id="IPR005225">
    <property type="entry name" value="Small_GTP-bd"/>
</dbReference>
<dbReference type="InterPro" id="IPR000795">
    <property type="entry name" value="T_Tr_GTP-bd_dom"/>
</dbReference>
<dbReference type="InterPro" id="IPR009000">
    <property type="entry name" value="Transl_B-barrel_sf"/>
</dbReference>
<dbReference type="NCBIfam" id="TIGR00231">
    <property type="entry name" value="small_GTP"/>
    <property type="match status" value="1"/>
</dbReference>
<dbReference type="PANTHER" id="PTHR43261:SF1">
    <property type="entry name" value="RIBOSOME-RELEASING FACTOR 2, MITOCHONDRIAL"/>
    <property type="match status" value="1"/>
</dbReference>
<dbReference type="PANTHER" id="PTHR43261">
    <property type="entry name" value="TRANSLATION ELONGATION FACTOR G-RELATED"/>
    <property type="match status" value="1"/>
</dbReference>
<dbReference type="Pfam" id="PF22042">
    <property type="entry name" value="EF-G_D2"/>
    <property type="match status" value="1"/>
</dbReference>
<dbReference type="Pfam" id="PF00679">
    <property type="entry name" value="EFG_C"/>
    <property type="match status" value="1"/>
</dbReference>
<dbReference type="Pfam" id="PF14492">
    <property type="entry name" value="EFG_III"/>
    <property type="match status" value="1"/>
</dbReference>
<dbReference type="Pfam" id="PF00009">
    <property type="entry name" value="GTP_EFTU"/>
    <property type="match status" value="1"/>
</dbReference>
<dbReference type="PRINTS" id="PR00315">
    <property type="entry name" value="ELONGATNFCT"/>
</dbReference>
<dbReference type="SMART" id="SM00838">
    <property type="entry name" value="EFG_C"/>
    <property type="match status" value="1"/>
</dbReference>
<dbReference type="SUPFAM" id="SSF54980">
    <property type="entry name" value="EF-G C-terminal domain-like"/>
    <property type="match status" value="2"/>
</dbReference>
<dbReference type="SUPFAM" id="SSF52540">
    <property type="entry name" value="P-loop containing nucleoside triphosphate hydrolases"/>
    <property type="match status" value="1"/>
</dbReference>
<dbReference type="SUPFAM" id="SSF50447">
    <property type="entry name" value="Translation proteins"/>
    <property type="match status" value="1"/>
</dbReference>
<dbReference type="PROSITE" id="PS00301">
    <property type="entry name" value="G_TR_1"/>
    <property type="match status" value="1"/>
</dbReference>
<dbReference type="PROSITE" id="PS51722">
    <property type="entry name" value="G_TR_2"/>
    <property type="match status" value="1"/>
</dbReference>
<name>RRF2M_EREGS</name>
<accession>Q754I9</accession>
<protein>
    <recommendedName>
        <fullName evidence="1">Ribosome-releasing factor 2, mitochondrial</fullName>
        <shortName evidence="1">RRF2mt</shortName>
    </recommendedName>
    <alternativeName>
        <fullName evidence="1">Elongation factor G 2, mitochondrial</fullName>
        <shortName evidence="1">EF-G2mt</shortName>
        <shortName evidence="1">mEF-G 2</shortName>
    </alternativeName>
</protein>
<organism>
    <name type="scientific">Eremothecium gossypii (strain ATCC 10895 / CBS 109.51 / FGSC 9923 / NRRL Y-1056)</name>
    <name type="common">Yeast</name>
    <name type="synonym">Ashbya gossypii</name>
    <dbReference type="NCBI Taxonomy" id="284811"/>
    <lineage>
        <taxon>Eukaryota</taxon>
        <taxon>Fungi</taxon>
        <taxon>Dikarya</taxon>
        <taxon>Ascomycota</taxon>
        <taxon>Saccharomycotina</taxon>
        <taxon>Saccharomycetes</taxon>
        <taxon>Saccharomycetales</taxon>
        <taxon>Saccharomycetaceae</taxon>
        <taxon>Eremothecium</taxon>
    </lineage>
</organism>
<reference key="1">
    <citation type="journal article" date="2004" name="Science">
        <title>The Ashbya gossypii genome as a tool for mapping the ancient Saccharomyces cerevisiae genome.</title>
        <authorList>
            <person name="Dietrich F.S."/>
            <person name="Voegeli S."/>
            <person name="Brachat S."/>
            <person name="Lerch A."/>
            <person name="Gates K."/>
            <person name="Steiner S."/>
            <person name="Mohr C."/>
            <person name="Poehlmann R."/>
            <person name="Luedi P."/>
            <person name="Choi S."/>
            <person name="Wing R.A."/>
            <person name="Flavier A."/>
            <person name="Gaffney T.D."/>
            <person name="Philippsen P."/>
        </authorList>
    </citation>
    <scope>NUCLEOTIDE SEQUENCE [LARGE SCALE GENOMIC DNA]</scope>
    <source>
        <strain>ATCC 10895 / CBS 109.51 / FGSC 9923 / NRRL Y-1056</strain>
    </source>
</reference>
<reference key="2">
    <citation type="journal article" date="2013" name="G3 (Bethesda)">
        <title>Genomes of Ashbya fungi isolated from insects reveal four mating-type loci, numerous translocations, lack of transposons, and distinct gene duplications.</title>
        <authorList>
            <person name="Dietrich F.S."/>
            <person name="Voegeli S."/>
            <person name="Kuo S."/>
            <person name="Philippsen P."/>
        </authorList>
    </citation>
    <scope>GENOME REANNOTATION</scope>
    <source>
        <strain>ATCC 10895 / CBS 109.51 / FGSC 9923 / NRRL Y-1056</strain>
    </source>
</reference>
<gene>
    <name evidence="1" type="primary">MEF2</name>
    <name type="ordered locus">AFR085W</name>
</gene>
<evidence type="ECO:0000255" key="1">
    <source>
        <dbReference type="HAMAP-Rule" id="MF_03059"/>
    </source>
</evidence>
<comment type="function">
    <text evidence="1">Mitochondrial GTPase that mediates the disassembly of ribosomes from messenger RNA at the termination of mitochondrial protein biosynthesis. Not involved in the GTP-dependent ribosomal translocation step during translation elongation.</text>
</comment>
<comment type="subcellular location">
    <subcellularLocation>
        <location evidence="1">Mitochondrion</location>
    </subcellularLocation>
</comment>
<comment type="similarity">
    <text evidence="1">Belongs to the TRAFAC class translation factor GTPase superfamily. Classic translation factor GTPase family. EF-G/EF-2 subfamily.</text>
</comment>